<accession>A7Z9X5</accession>
<gene>
    <name type="ordered locus">RBAM_034720</name>
</gene>
<comment type="similarity">
    <text evidence="1">Belongs to the UPF0741 family.</text>
</comment>
<evidence type="ECO:0000255" key="1">
    <source>
        <dbReference type="HAMAP-Rule" id="MF_01863"/>
    </source>
</evidence>
<name>Y3472_BACVZ</name>
<organism>
    <name type="scientific">Bacillus velezensis (strain DSM 23117 / BGSC 10A6 / LMG 26770 / FZB42)</name>
    <name type="common">Bacillus amyloliquefaciens subsp. plantarum</name>
    <dbReference type="NCBI Taxonomy" id="326423"/>
    <lineage>
        <taxon>Bacteria</taxon>
        <taxon>Bacillati</taxon>
        <taxon>Bacillota</taxon>
        <taxon>Bacilli</taxon>
        <taxon>Bacillales</taxon>
        <taxon>Bacillaceae</taxon>
        <taxon>Bacillus</taxon>
        <taxon>Bacillus amyloliquefaciens group</taxon>
    </lineage>
</organism>
<dbReference type="EMBL" id="CP000560">
    <property type="protein sequence ID" value="ABS75801.1"/>
    <property type="molecule type" value="Genomic_DNA"/>
</dbReference>
<dbReference type="RefSeq" id="WP_003151034.1">
    <property type="nucleotide sequence ID" value="NC_009725.2"/>
</dbReference>
<dbReference type="SMR" id="A7Z9X5"/>
<dbReference type="GeneID" id="93082616"/>
<dbReference type="KEGG" id="bay:RBAM_034720"/>
<dbReference type="HOGENOM" id="CLU_163820_1_0_9"/>
<dbReference type="Proteomes" id="UP000001120">
    <property type="component" value="Chromosome"/>
</dbReference>
<dbReference type="HAMAP" id="MF_01863">
    <property type="entry name" value="UPF0741"/>
    <property type="match status" value="1"/>
</dbReference>
<dbReference type="InterPro" id="IPR009910">
    <property type="entry name" value="DUF1450"/>
</dbReference>
<dbReference type="InterPro" id="IPR020880">
    <property type="entry name" value="UPF0741"/>
</dbReference>
<dbReference type="Pfam" id="PF07293">
    <property type="entry name" value="DUF1450"/>
    <property type="match status" value="1"/>
</dbReference>
<feature type="chain" id="PRO_0000372724" description="UPF0741 protein RBAM_034720">
    <location>
        <begin position="1"/>
        <end position="74"/>
    </location>
</feature>
<protein>
    <recommendedName>
        <fullName evidence="1">UPF0741 protein RBAM_034720</fullName>
    </recommendedName>
</protein>
<proteinExistence type="inferred from homology"/>
<sequence>MANEFRVCDDCQATNIKTLLPRLKEADPDAKVEVGCQSYCGPGRKKSFAFVNNRPLSAPTEDELIEKVKKKIKK</sequence>
<reference key="1">
    <citation type="journal article" date="2007" name="Nat. Biotechnol.">
        <title>Comparative analysis of the complete genome sequence of the plant growth-promoting bacterium Bacillus amyloliquefaciens FZB42.</title>
        <authorList>
            <person name="Chen X.H."/>
            <person name="Koumoutsi A."/>
            <person name="Scholz R."/>
            <person name="Eisenreich A."/>
            <person name="Schneider K."/>
            <person name="Heinemeyer I."/>
            <person name="Morgenstern B."/>
            <person name="Voss B."/>
            <person name="Hess W.R."/>
            <person name="Reva O."/>
            <person name="Junge H."/>
            <person name="Voigt B."/>
            <person name="Jungblut P.R."/>
            <person name="Vater J."/>
            <person name="Suessmuth R."/>
            <person name="Liesegang H."/>
            <person name="Strittmatter A."/>
            <person name="Gottschalk G."/>
            <person name="Borriss R."/>
        </authorList>
    </citation>
    <scope>NUCLEOTIDE SEQUENCE [LARGE SCALE GENOMIC DNA]</scope>
    <source>
        <strain>DSM 23117 / BGSC 10A6 / LMG 26770 / FZB42</strain>
    </source>
</reference>